<evidence type="ECO:0000255" key="1">
    <source>
        <dbReference type="HAMAP-Rule" id="MF_00537"/>
    </source>
</evidence>
<evidence type="ECO:0000256" key="2">
    <source>
        <dbReference type="SAM" id="MobiDB-lite"/>
    </source>
</evidence>
<reference key="1">
    <citation type="journal article" date="2004" name="Science">
        <title>The complete genome sequence of Propionibacterium acnes, a commensal of human skin.</title>
        <authorList>
            <person name="Brueggemann H."/>
            <person name="Henne A."/>
            <person name="Hoster F."/>
            <person name="Liesegang H."/>
            <person name="Wiezer A."/>
            <person name="Strittmatter A."/>
            <person name="Hujer S."/>
            <person name="Duerre P."/>
            <person name="Gottschalk G."/>
        </authorList>
    </citation>
    <scope>NUCLEOTIDE SEQUENCE [LARGE SCALE GENOMIC DNA]</scope>
    <source>
        <strain>DSM 16379 / KPA171202</strain>
    </source>
</reference>
<gene>
    <name evidence="1" type="primary">rpsN</name>
    <name type="synonym">rpsN2</name>
    <name type="ordered locus">PPA2161</name>
</gene>
<dbReference type="EMBL" id="AE017283">
    <property type="protein sequence ID" value="AAT83867.1"/>
    <property type="molecule type" value="Genomic_DNA"/>
</dbReference>
<dbReference type="RefSeq" id="WP_002516294.1">
    <property type="nucleotide sequence ID" value="NZ_CP025935.1"/>
</dbReference>
<dbReference type="SMR" id="Q6A5U6"/>
<dbReference type="EnsemblBacteria" id="AAT83867">
    <property type="protein sequence ID" value="AAT83867"/>
    <property type="gene ID" value="PPA2161"/>
</dbReference>
<dbReference type="GeneID" id="92858091"/>
<dbReference type="KEGG" id="pac:PPA2161"/>
<dbReference type="eggNOG" id="COG0199">
    <property type="taxonomic scope" value="Bacteria"/>
</dbReference>
<dbReference type="HOGENOM" id="CLU_139869_0_1_11"/>
<dbReference type="Proteomes" id="UP000000603">
    <property type="component" value="Chromosome"/>
</dbReference>
<dbReference type="GO" id="GO:0015935">
    <property type="term" value="C:small ribosomal subunit"/>
    <property type="evidence" value="ECO:0007669"/>
    <property type="project" value="TreeGrafter"/>
</dbReference>
<dbReference type="GO" id="GO:0019843">
    <property type="term" value="F:rRNA binding"/>
    <property type="evidence" value="ECO:0007669"/>
    <property type="project" value="UniProtKB-UniRule"/>
</dbReference>
<dbReference type="GO" id="GO:0003735">
    <property type="term" value="F:structural constituent of ribosome"/>
    <property type="evidence" value="ECO:0007669"/>
    <property type="project" value="InterPro"/>
</dbReference>
<dbReference type="GO" id="GO:0006412">
    <property type="term" value="P:translation"/>
    <property type="evidence" value="ECO:0007669"/>
    <property type="project" value="UniProtKB-UniRule"/>
</dbReference>
<dbReference type="FunFam" id="1.10.287.1480:FF:000001">
    <property type="entry name" value="30S ribosomal protein S14"/>
    <property type="match status" value="1"/>
</dbReference>
<dbReference type="Gene3D" id="1.10.287.1480">
    <property type="match status" value="1"/>
</dbReference>
<dbReference type="HAMAP" id="MF_00537">
    <property type="entry name" value="Ribosomal_uS14_1"/>
    <property type="match status" value="1"/>
</dbReference>
<dbReference type="InterPro" id="IPR001209">
    <property type="entry name" value="Ribosomal_uS14"/>
</dbReference>
<dbReference type="InterPro" id="IPR023036">
    <property type="entry name" value="Ribosomal_uS14_bac/plastid"/>
</dbReference>
<dbReference type="NCBIfam" id="NF006477">
    <property type="entry name" value="PRK08881.1"/>
    <property type="match status" value="1"/>
</dbReference>
<dbReference type="PANTHER" id="PTHR19836">
    <property type="entry name" value="30S RIBOSOMAL PROTEIN S14"/>
    <property type="match status" value="1"/>
</dbReference>
<dbReference type="PANTHER" id="PTHR19836:SF23">
    <property type="entry name" value="SMALL RIBOSOMAL SUBUNIT PROTEIN US14A"/>
    <property type="match status" value="1"/>
</dbReference>
<dbReference type="Pfam" id="PF00253">
    <property type="entry name" value="Ribosomal_S14"/>
    <property type="match status" value="1"/>
</dbReference>
<dbReference type="SUPFAM" id="SSF57716">
    <property type="entry name" value="Glucocorticoid receptor-like (DNA-binding domain)"/>
    <property type="match status" value="1"/>
</dbReference>
<name>RS14_CUTAK</name>
<protein>
    <recommendedName>
        <fullName evidence="1">Small ribosomal subunit protein uS14</fullName>
    </recommendedName>
    <alternativeName>
        <fullName>30S ribosomal protein S14</fullName>
    </alternativeName>
</protein>
<proteinExistence type="inferred from homology"/>
<organism>
    <name type="scientific">Cutibacterium acnes (strain DSM 16379 / KPA171202)</name>
    <name type="common">Propionibacterium acnes</name>
    <dbReference type="NCBI Taxonomy" id="267747"/>
    <lineage>
        <taxon>Bacteria</taxon>
        <taxon>Bacillati</taxon>
        <taxon>Actinomycetota</taxon>
        <taxon>Actinomycetes</taxon>
        <taxon>Propionibacteriales</taxon>
        <taxon>Propionibacteriaceae</taxon>
        <taxon>Cutibacterium</taxon>
    </lineage>
</organism>
<comment type="function">
    <text evidence="1">Binds 16S rRNA, required for the assembly of 30S particles and may also be responsible for determining the conformation of the 16S rRNA at the A site.</text>
</comment>
<comment type="subunit">
    <text evidence="1">Part of the 30S ribosomal subunit. Contacts proteins S3 and S10.</text>
</comment>
<comment type="similarity">
    <text evidence="1">Belongs to the universal ribosomal protein uS14 family.</text>
</comment>
<sequence length="101" mass="11536">MAKKSKIVAQKKREKLVAQYAERRAELKAIMKCPTASLDERMEASRKLSRLPRDSSPVRLRNRDQVDGRPRGYVGKAGVSRARFREMAHRGELPGITKSSW</sequence>
<keyword id="KW-0687">Ribonucleoprotein</keyword>
<keyword id="KW-0689">Ribosomal protein</keyword>
<keyword id="KW-0694">RNA-binding</keyword>
<keyword id="KW-0699">rRNA-binding</keyword>
<accession>Q6A5U6</accession>
<feature type="chain" id="PRO_0000269057" description="Small ribosomal subunit protein uS14">
    <location>
        <begin position="1"/>
        <end position="101"/>
    </location>
</feature>
<feature type="region of interest" description="Disordered" evidence="2">
    <location>
        <begin position="44"/>
        <end position="74"/>
    </location>
</feature>
<feature type="compositionally biased region" description="Basic and acidic residues" evidence="2">
    <location>
        <begin position="61"/>
        <end position="70"/>
    </location>
</feature>